<feature type="chain" id="PRO_0000124936" description="Large ribosomal subunit protein uL5">
    <location>
        <begin position="1"/>
        <end position="181"/>
    </location>
</feature>
<dbReference type="EMBL" id="AE001439">
    <property type="protein sequence ID" value="AAD06793.1"/>
    <property type="molecule type" value="Genomic_DNA"/>
</dbReference>
<dbReference type="PIR" id="C71834">
    <property type="entry name" value="C71834"/>
</dbReference>
<dbReference type="RefSeq" id="WP_000467369.1">
    <property type="nucleotide sequence ID" value="NC_000921.1"/>
</dbReference>
<dbReference type="SMR" id="Q9ZJS4"/>
<dbReference type="KEGG" id="hpj:jhp_1227"/>
<dbReference type="PATRIC" id="fig|85963.30.peg.1344"/>
<dbReference type="eggNOG" id="COG0094">
    <property type="taxonomic scope" value="Bacteria"/>
</dbReference>
<dbReference type="Proteomes" id="UP000000804">
    <property type="component" value="Chromosome"/>
</dbReference>
<dbReference type="GO" id="GO:1990904">
    <property type="term" value="C:ribonucleoprotein complex"/>
    <property type="evidence" value="ECO:0007669"/>
    <property type="project" value="UniProtKB-KW"/>
</dbReference>
<dbReference type="GO" id="GO:0005840">
    <property type="term" value="C:ribosome"/>
    <property type="evidence" value="ECO:0007669"/>
    <property type="project" value="UniProtKB-KW"/>
</dbReference>
<dbReference type="GO" id="GO:0019843">
    <property type="term" value="F:rRNA binding"/>
    <property type="evidence" value="ECO:0007669"/>
    <property type="project" value="UniProtKB-UniRule"/>
</dbReference>
<dbReference type="GO" id="GO:0003735">
    <property type="term" value="F:structural constituent of ribosome"/>
    <property type="evidence" value="ECO:0007669"/>
    <property type="project" value="InterPro"/>
</dbReference>
<dbReference type="GO" id="GO:0000049">
    <property type="term" value="F:tRNA binding"/>
    <property type="evidence" value="ECO:0007669"/>
    <property type="project" value="UniProtKB-UniRule"/>
</dbReference>
<dbReference type="GO" id="GO:0006412">
    <property type="term" value="P:translation"/>
    <property type="evidence" value="ECO:0007669"/>
    <property type="project" value="UniProtKB-UniRule"/>
</dbReference>
<dbReference type="FunFam" id="3.30.1440.10:FF:000001">
    <property type="entry name" value="50S ribosomal protein L5"/>
    <property type="match status" value="1"/>
</dbReference>
<dbReference type="Gene3D" id="3.30.1440.10">
    <property type="match status" value="1"/>
</dbReference>
<dbReference type="HAMAP" id="MF_01333_B">
    <property type="entry name" value="Ribosomal_uL5_B"/>
    <property type="match status" value="1"/>
</dbReference>
<dbReference type="InterPro" id="IPR002132">
    <property type="entry name" value="Ribosomal_uL5"/>
</dbReference>
<dbReference type="InterPro" id="IPR020930">
    <property type="entry name" value="Ribosomal_uL5_bac-type"/>
</dbReference>
<dbReference type="InterPro" id="IPR031309">
    <property type="entry name" value="Ribosomal_uL5_C"/>
</dbReference>
<dbReference type="InterPro" id="IPR020929">
    <property type="entry name" value="Ribosomal_uL5_CS"/>
</dbReference>
<dbReference type="InterPro" id="IPR022803">
    <property type="entry name" value="Ribosomal_uL5_dom_sf"/>
</dbReference>
<dbReference type="InterPro" id="IPR031310">
    <property type="entry name" value="Ribosomal_uL5_N"/>
</dbReference>
<dbReference type="NCBIfam" id="NF000585">
    <property type="entry name" value="PRK00010.1"/>
    <property type="match status" value="1"/>
</dbReference>
<dbReference type="PANTHER" id="PTHR11994">
    <property type="entry name" value="60S RIBOSOMAL PROTEIN L11-RELATED"/>
    <property type="match status" value="1"/>
</dbReference>
<dbReference type="Pfam" id="PF00281">
    <property type="entry name" value="Ribosomal_L5"/>
    <property type="match status" value="1"/>
</dbReference>
<dbReference type="Pfam" id="PF00673">
    <property type="entry name" value="Ribosomal_L5_C"/>
    <property type="match status" value="1"/>
</dbReference>
<dbReference type="PIRSF" id="PIRSF002161">
    <property type="entry name" value="Ribosomal_L5"/>
    <property type="match status" value="1"/>
</dbReference>
<dbReference type="SUPFAM" id="SSF55282">
    <property type="entry name" value="RL5-like"/>
    <property type="match status" value="1"/>
</dbReference>
<dbReference type="PROSITE" id="PS00358">
    <property type="entry name" value="RIBOSOMAL_L5"/>
    <property type="match status" value="1"/>
</dbReference>
<protein>
    <recommendedName>
        <fullName evidence="1">Large ribosomal subunit protein uL5</fullName>
    </recommendedName>
    <alternativeName>
        <fullName evidence="2">50S ribosomal protein L5</fullName>
    </alternativeName>
</protein>
<organism>
    <name type="scientific">Helicobacter pylori (strain J99 / ATCC 700824)</name>
    <name type="common">Campylobacter pylori J99</name>
    <dbReference type="NCBI Taxonomy" id="85963"/>
    <lineage>
        <taxon>Bacteria</taxon>
        <taxon>Pseudomonadati</taxon>
        <taxon>Campylobacterota</taxon>
        <taxon>Epsilonproteobacteria</taxon>
        <taxon>Campylobacterales</taxon>
        <taxon>Helicobacteraceae</taxon>
        <taxon>Helicobacter</taxon>
    </lineage>
</organism>
<reference key="1">
    <citation type="journal article" date="1999" name="Nature">
        <title>Genomic sequence comparison of two unrelated isolates of the human gastric pathogen Helicobacter pylori.</title>
        <authorList>
            <person name="Alm R.A."/>
            <person name="Ling L.-S.L."/>
            <person name="Moir D.T."/>
            <person name="King B.L."/>
            <person name="Brown E.D."/>
            <person name="Doig P.C."/>
            <person name="Smith D.R."/>
            <person name="Noonan B."/>
            <person name="Guild B.C."/>
            <person name="deJonge B.L."/>
            <person name="Carmel G."/>
            <person name="Tummino P.J."/>
            <person name="Caruso A."/>
            <person name="Uria-Nickelsen M."/>
            <person name="Mills D.M."/>
            <person name="Ives C."/>
            <person name="Gibson R."/>
            <person name="Merberg D."/>
            <person name="Mills S.D."/>
            <person name="Jiang Q."/>
            <person name="Taylor D.E."/>
            <person name="Vovis G.F."/>
            <person name="Trust T.J."/>
        </authorList>
    </citation>
    <scope>NUCLEOTIDE SEQUENCE [LARGE SCALE GENOMIC DNA]</scope>
    <source>
        <strain>J99 / ATCC 700824</strain>
    </source>
</reference>
<keyword id="KW-0687">Ribonucleoprotein</keyword>
<keyword id="KW-0689">Ribosomal protein</keyword>
<keyword id="KW-0694">RNA-binding</keyword>
<keyword id="KW-0699">rRNA-binding</keyword>
<keyword id="KW-0820">tRNA-binding</keyword>
<name>RL5_HELPJ</name>
<sequence length="181" mass="20264">MFGLKQFYQNEVRAKLAQELDIKNPMLLPKLEKIVISVGAGAHAKDMKIMQNIAQTISLVAGQKAVITKAKKSVAGFKIREGMAVGAKVTLRNKRMYNFLEKLIVISLPRVKDFRGISRNGFDGRGNYTFGINEQLIFPEVVYDDIMVSHGMNITMVTSTDNDKEAFKLLELLGLPFAKVR</sequence>
<comment type="function">
    <text evidence="1">This is one of the proteins that bind and probably mediate the attachment of the 5S RNA into the large ribosomal subunit, where it forms part of the central protuberance. In the 70S ribosome it contacts protein S13 of the 30S subunit (bridge B1b), connecting the 2 subunits; this bridge is implicated in subunit movement. Contacts the P site tRNA; the 5S rRNA and some of its associated proteins might help stabilize positioning of ribosome-bound tRNAs.</text>
</comment>
<comment type="subunit">
    <text evidence="1">Part of the 50S ribosomal subunit; part of the 5S rRNA/L5/L18/L25 subcomplex. Contacts the 5S rRNA and the P site tRNA. Forms a bridge to the 30S subunit in the 70S ribosome.</text>
</comment>
<comment type="similarity">
    <text evidence="1">Belongs to the universal ribosomal protein uL5 family.</text>
</comment>
<gene>
    <name evidence="1" type="primary">rplE</name>
    <name type="ordered locus">jhp_1227</name>
</gene>
<accession>Q9ZJS4</accession>
<proteinExistence type="inferred from homology"/>
<evidence type="ECO:0000255" key="1">
    <source>
        <dbReference type="HAMAP-Rule" id="MF_01333"/>
    </source>
</evidence>
<evidence type="ECO:0000305" key="2"/>